<sequence>MEGENTTDPPYTTAASSGQSIFVRPPPIAPVLATTSNFSQSELKELHSMSIASTGFVSQSVPYSVTAQWGTNAAASSNVNPIPQASPMLANAPFGRPGTLAPPGLMTSPPAFPGSNPFSTTPRPGMSAGPAQMNPGIHPHMYPPYHSLPGTPQGMWLQPPSMGGIPRAPFLSHPTTFPGSYPFPVRGISPNLPYSGSHPLGASPMGSVGNVHALPGRQPDISPGRKTEELSGIDDRAGSQLVGNRLDAWTAHKSEAGVLYYYNSVTGQSTYEKPPGFGGEPDKVPVQPIPVSMESLPGTDWALVSTNDGKKYYYNNKTKVSSWQIPAEVKDFGKKLEERAMESVASVPSADLTEKGSDLTSLSAPAISNGGRDAASLKTTNFGSSALDLVKKKLHDSGMPVSSTITSEANSGKTTEVTPSGESGNSTGKVKDAPGAGALSDSSSDSEDEDSGPSKEECSKQFKEMLKERGIAPFSKWEKELPKIIFDPRFKAIPSHSVRRSLFEQYVKTRAEEERREKRAAHKAAIEGFRQLLDDASTDIDQHTDYRAFKKKWGNDLRFEAIERKEREGLLNERVLSLKRSAEQKAQEIRAAAASDFKTMLREREISINSHWSKVKDSLRNEPRYRSVAHEDREVFYYEYIAELKAAQRGDDHEMKARDEEDKLRERERELRKRKEREVQEVERVRQKIRRKEASSSYQALLVEKIRDPEASWTESKPILERDPQKRASNPDLEPADKEKLFRDHVKSLYERCVHDFKALLAEALSSEAATLQTEDGKTALNSWSTAKQVLKPDIRYSKMPRQDREVVWRRYVEDISRKQRHENYQEEKQRDYKT</sequence>
<gene>
    <name evidence="5" type="primary">PRP40C</name>
    <name evidence="6" type="synonym">MED35_3</name>
    <name type="synonym">MED35C</name>
    <name evidence="9" type="ordered locus">At3g19840</name>
    <name evidence="10" type="ORF">MPN9.8</name>
</gene>
<proteinExistence type="evidence at protein level"/>
<keyword id="KW-0507">mRNA processing</keyword>
<keyword id="KW-0508">mRNA splicing</keyword>
<keyword id="KW-0539">Nucleus</keyword>
<keyword id="KW-1185">Reference proteome</keyword>
<keyword id="KW-0677">Repeat</keyword>
<reference key="1">
    <citation type="journal article" date="2000" name="DNA Res.">
        <title>Structural analysis of Arabidopsis thaliana chromosome 3. I. Sequence features of the regions of 4,504,864 bp covered by sixty P1 and TAC clones.</title>
        <authorList>
            <person name="Sato S."/>
            <person name="Nakamura Y."/>
            <person name="Kaneko T."/>
            <person name="Katoh T."/>
            <person name="Asamizu E."/>
            <person name="Tabata S."/>
        </authorList>
    </citation>
    <scope>NUCLEOTIDE SEQUENCE [LARGE SCALE GENOMIC DNA]</scope>
    <source>
        <strain>cv. Columbia</strain>
    </source>
</reference>
<reference key="2">
    <citation type="journal article" date="2017" name="Plant J.">
        <title>Araport11: a complete reannotation of the Arabidopsis thaliana reference genome.</title>
        <authorList>
            <person name="Cheng C.Y."/>
            <person name="Krishnakumar V."/>
            <person name="Chan A.P."/>
            <person name="Thibaud-Nissen F."/>
            <person name="Schobel S."/>
            <person name="Town C.D."/>
        </authorList>
    </citation>
    <scope>GENOME REANNOTATION</scope>
    <source>
        <strain>cv. Columbia</strain>
    </source>
</reference>
<reference key="3">
    <citation type="journal article" date="2002" name="Science">
        <title>Functional annotation of a full-length Arabidopsis cDNA collection.</title>
        <authorList>
            <person name="Seki M."/>
            <person name="Narusaka M."/>
            <person name="Kamiya A."/>
            <person name="Ishida J."/>
            <person name="Satou M."/>
            <person name="Sakurai T."/>
            <person name="Nakajima M."/>
            <person name="Enju A."/>
            <person name="Akiyama K."/>
            <person name="Oono Y."/>
            <person name="Muramatsu M."/>
            <person name="Hayashizaki Y."/>
            <person name="Kawai J."/>
            <person name="Carninci P."/>
            <person name="Itoh M."/>
            <person name="Ishii Y."/>
            <person name="Arakawa T."/>
            <person name="Shibata K."/>
            <person name="Shinagawa A."/>
            <person name="Shinozaki K."/>
        </authorList>
    </citation>
    <scope>NUCLEOTIDE SEQUENCE [LARGE SCALE MRNA]</scope>
    <source>
        <strain>cv. Columbia</strain>
    </source>
</reference>
<reference key="4">
    <citation type="journal article" date="2009" name="Arch. Biochem. Biophys.">
        <title>Arabidopsis thaliana PRP40s are RNA polymerase II C-terminal domain-associating proteins.</title>
        <authorList>
            <person name="Kang C.H."/>
            <person name="Feng Y."/>
            <person name="Vikram M."/>
            <person name="Jeong I.S."/>
            <person name="Lee J.R."/>
            <person name="Bahk J.D."/>
            <person name="Yun D.J."/>
            <person name="Lee S.Y."/>
            <person name="Koiwa H."/>
        </authorList>
    </citation>
    <scope>FUNCTION</scope>
    <scope>INTERACTION WITH NRPB1</scope>
    <scope>TISSUE SPECIFICITY</scope>
</reference>
<reference key="5">
    <citation type="journal article" date="2011" name="Plant Physiol.">
        <title>The Mediator complex in plants: structure, phylogeny, and expression profiling of representative genes in a dicot (Arabidopsis) and a monocot (rice) during reproduction and abiotic stress.</title>
        <authorList>
            <person name="Mathur S."/>
            <person name="Vyas S."/>
            <person name="Kapoor S."/>
            <person name="Tyagi A.K."/>
        </authorList>
    </citation>
    <scope>NOMENCLATURE</scope>
</reference>
<evidence type="ECO:0000255" key="1">
    <source>
        <dbReference type="PROSITE-ProRule" id="PRU00224"/>
    </source>
</evidence>
<evidence type="ECO:0000255" key="2">
    <source>
        <dbReference type="PROSITE-ProRule" id="PRU01013"/>
    </source>
</evidence>
<evidence type="ECO:0000256" key="3">
    <source>
        <dbReference type="SAM" id="MobiDB-lite"/>
    </source>
</evidence>
<evidence type="ECO:0000269" key="4">
    <source>
    </source>
</evidence>
<evidence type="ECO:0000303" key="5">
    <source>
    </source>
</evidence>
<evidence type="ECO:0000303" key="6">
    <source>
    </source>
</evidence>
<evidence type="ECO:0000305" key="7"/>
<evidence type="ECO:0000305" key="8">
    <source>
    </source>
</evidence>
<evidence type="ECO:0000312" key="9">
    <source>
        <dbReference type="Araport" id="AT3G19840"/>
    </source>
</evidence>
<evidence type="ECO:0000312" key="10">
    <source>
        <dbReference type="EMBL" id="BAB01298.1"/>
    </source>
</evidence>
<dbReference type="EMBL" id="AB025631">
    <property type="protein sequence ID" value="BAB01298.1"/>
    <property type="molecule type" value="Genomic_DNA"/>
</dbReference>
<dbReference type="EMBL" id="CP002686">
    <property type="protein sequence ID" value="AEE76298.1"/>
    <property type="molecule type" value="Genomic_DNA"/>
</dbReference>
<dbReference type="EMBL" id="AK117183">
    <property type="protein sequence ID" value="BAC41860.1"/>
    <property type="status" value="ALT_SEQ"/>
    <property type="molecule type" value="mRNA"/>
</dbReference>
<dbReference type="RefSeq" id="NP_188618.3">
    <property type="nucleotide sequence ID" value="NM_112874.4"/>
</dbReference>
<dbReference type="SMR" id="Q9LT25"/>
<dbReference type="BioGRID" id="6853">
    <property type="interactions" value="1"/>
</dbReference>
<dbReference type="FunCoup" id="Q9LT25">
    <property type="interactions" value="4115"/>
</dbReference>
<dbReference type="STRING" id="3702.Q9LT25"/>
<dbReference type="iPTMnet" id="Q9LT25"/>
<dbReference type="PaxDb" id="3702-AT3G19840.1"/>
<dbReference type="ProteomicsDB" id="234797"/>
<dbReference type="EnsemblPlants" id="AT3G19840.1">
    <property type="protein sequence ID" value="AT3G19840.1"/>
    <property type="gene ID" value="AT3G19840"/>
</dbReference>
<dbReference type="GeneID" id="821521"/>
<dbReference type="Gramene" id="AT3G19840.1">
    <property type="protein sequence ID" value="AT3G19840.1"/>
    <property type="gene ID" value="AT3G19840"/>
</dbReference>
<dbReference type="KEGG" id="ath:AT3G19840"/>
<dbReference type="Araport" id="AT3G19840"/>
<dbReference type="TAIR" id="AT3G19840">
    <property type="gene designation" value="PRP40C"/>
</dbReference>
<dbReference type="eggNOG" id="KOG0155">
    <property type="taxonomic scope" value="Eukaryota"/>
</dbReference>
<dbReference type="HOGENOM" id="CLU_004993_1_0_1"/>
<dbReference type="InParanoid" id="Q9LT25"/>
<dbReference type="OMA" id="GMWLQPP"/>
<dbReference type="PhylomeDB" id="Q9LT25"/>
<dbReference type="CD-CODE" id="4299E36E">
    <property type="entry name" value="Nucleolus"/>
</dbReference>
<dbReference type="PRO" id="PR:Q9LT25"/>
<dbReference type="Proteomes" id="UP000006548">
    <property type="component" value="Chromosome 3"/>
</dbReference>
<dbReference type="ExpressionAtlas" id="Q9LT25">
    <property type="expression patterns" value="baseline and differential"/>
</dbReference>
<dbReference type="GO" id="GO:0005634">
    <property type="term" value="C:nucleus"/>
    <property type="evidence" value="ECO:0007669"/>
    <property type="project" value="UniProtKB-SubCell"/>
</dbReference>
<dbReference type="GO" id="GO:0070063">
    <property type="term" value="F:RNA polymerase binding"/>
    <property type="evidence" value="ECO:0000314"/>
    <property type="project" value="TAIR"/>
</dbReference>
<dbReference type="GO" id="GO:0006397">
    <property type="term" value="P:mRNA processing"/>
    <property type="evidence" value="ECO:0007669"/>
    <property type="project" value="UniProtKB-KW"/>
</dbReference>
<dbReference type="GO" id="GO:0008380">
    <property type="term" value="P:RNA splicing"/>
    <property type="evidence" value="ECO:0000314"/>
    <property type="project" value="TAIR"/>
</dbReference>
<dbReference type="CDD" id="cd00201">
    <property type="entry name" value="WW"/>
    <property type="match status" value="2"/>
</dbReference>
<dbReference type="FunFam" id="1.10.10.440:FF:000020">
    <property type="entry name" value="Pre-mRNA-processing protein 40C"/>
    <property type="match status" value="1"/>
</dbReference>
<dbReference type="FunFam" id="1.10.10.440:FF:000028">
    <property type="entry name" value="Pre-mRNA-processing protein 40C"/>
    <property type="match status" value="1"/>
</dbReference>
<dbReference type="FunFam" id="1.10.10.440:FF:000021">
    <property type="entry name" value="pre-mRNA-processing protein 40C isoform X1"/>
    <property type="match status" value="1"/>
</dbReference>
<dbReference type="Gene3D" id="2.20.70.10">
    <property type="match status" value="2"/>
</dbReference>
<dbReference type="Gene3D" id="1.10.10.440">
    <property type="entry name" value="FF domain"/>
    <property type="match status" value="5"/>
</dbReference>
<dbReference type="InterPro" id="IPR002713">
    <property type="entry name" value="FF_domain"/>
</dbReference>
<dbReference type="InterPro" id="IPR036517">
    <property type="entry name" value="FF_domain_sf"/>
</dbReference>
<dbReference type="InterPro" id="IPR045148">
    <property type="entry name" value="TCRG1-like"/>
</dbReference>
<dbReference type="InterPro" id="IPR001202">
    <property type="entry name" value="WW_dom"/>
</dbReference>
<dbReference type="InterPro" id="IPR036020">
    <property type="entry name" value="WW_dom_sf"/>
</dbReference>
<dbReference type="PANTHER" id="PTHR15377">
    <property type="entry name" value="TRANSCRIPTION ELONGATION REGULATOR 1"/>
    <property type="match status" value="1"/>
</dbReference>
<dbReference type="PANTHER" id="PTHR15377:SF3">
    <property type="entry name" value="WW DOMAIN-CONTAINING PROTEIN"/>
    <property type="match status" value="1"/>
</dbReference>
<dbReference type="Pfam" id="PF01846">
    <property type="entry name" value="FF"/>
    <property type="match status" value="4"/>
</dbReference>
<dbReference type="Pfam" id="PF00397">
    <property type="entry name" value="WW"/>
    <property type="match status" value="2"/>
</dbReference>
<dbReference type="SMART" id="SM00441">
    <property type="entry name" value="FF"/>
    <property type="match status" value="4"/>
</dbReference>
<dbReference type="SMART" id="SM00456">
    <property type="entry name" value="WW"/>
    <property type="match status" value="2"/>
</dbReference>
<dbReference type="SUPFAM" id="SSF81698">
    <property type="entry name" value="FF domain"/>
    <property type="match status" value="5"/>
</dbReference>
<dbReference type="SUPFAM" id="SSF51045">
    <property type="entry name" value="WW domain"/>
    <property type="match status" value="2"/>
</dbReference>
<dbReference type="PROSITE" id="PS51676">
    <property type="entry name" value="FF"/>
    <property type="match status" value="5"/>
</dbReference>
<dbReference type="PROSITE" id="PS01159">
    <property type="entry name" value="WW_DOMAIN_1"/>
    <property type="match status" value="2"/>
</dbReference>
<dbReference type="PROSITE" id="PS50020">
    <property type="entry name" value="WW_DOMAIN_2"/>
    <property type="match status" value="2"/>
</dbReference>
<name>PR40C_ARATH</name>
<comment type="function">
    <text evidence="8">Binds the phosphorylated C-terminal domain (CTD) of the largest subunit of RNA polymerase II and functions as a scaffold for RNA processing machineries (Probable). May be involved in pre-mRNA splicing (Probable).</text>
</comment>
<comment type="subunit">
    <text evidence="4">Interacts (via the WW domains) with the phosphorylated C-terminal domain of NRPB1 (via CTD domain).</text>
</comment>
<comment type="subcellular location">
    <subcellularLocation>
        <location evidence="7">Nucleus</location>
    </subcellularLocation>
</comment>
<comment type="tissue specificity">
    <text evidence="4">Expressed in roots, shoots, rosette leaves, cauline leaves, stems and flowers.</text>
</comment>
<comment type="similarity">
    <text evidence="7">Belongs to the PRPF40 family.</text>
</comment>
<comment type="sequence caution" evidence="7">
    <conflict type="miscellaneous discrepancy">
        <sequence resource="EMBL-CDS" id="BAC41860"/>
    </conflict>
    <text>Intron retention.</text>
</comment>
<organism>
    <name type="scientific">Arabidopsis thaliana</name>
    <name type="common">Mouse-ear cress</name>
    <dbReference type="NCBI Taxonomy" id="3702"/>
    <lineage>
        <taxon>Eukaryota</taxon>
        <taxon>Viridiplantae</taxon>
        <taxon>Streptophyta</taxon>
        <taxon>Embryophyta</taxon>
        <taxon>Tracheophyta</taxon>
        <taxon>Spermatophyta</taxon>
        <taxon>Magnoliopsida</taxon>
        <taxon>eudicotyledons</taxon>
        <taxon>Gunneridae</taxon>
        <taxon>Pentapetalae</taxon>
        <taxon>rosids</taxon>
        <taxon>malvids</taxon>
        <taxon>Brassicales</taxon>
        <taxon>Brassicaceae</taxon>
        <taxon>Camelineae</taxon>
        <taxon>Arabidopsis</taxon>
    </lineage>
</organism>
<accession>Q9LT25</accession>
<accession>Q8GZ66</accession>
<feature type="chain" id="PRO_0000418359" description="Pre-mRNA-processing protein 40C">
    <location>
        <begin position="1"/>
        <end position="835"/>
    </location>
</feature>
<feature type="domain" description="WW 1" evidence="1">
    <location>
        <begin position="243"/>
        <end position="276"/>
    </location>
</feature>
<feature type="domain" description="WW 2" evidence="1">
    <location>
        <begin position="295"/>
        <end position="328"/>
    </location>
</feature>
<feature type="domain" description="FF 1" evidence="2">
    <location>
        <begin position="455"/>
        <end position="509"/>
    </location>
</feature>
<feature type="domain" description="FF 2" evidence="2">
    <location>
        <begin position="519"/>
        <end position="577"/>
    </location>
</feature>
<feature type="domain" description="FF 3" evidence="2">
    <location>
        <begin position="590"/>
        <end position="643"/>
    </location>
</feature>
<feature type="domain" description="FF 4" evidence="2">
    <location>
        <begin position="691"/>
        <end position="748"/>
    </location>
</feature>
<feature type="domain" description="FF 5" evidence="2">
    <location>
        <begin position="750"/>
        <end position="815"/>
    </location>
</feature>
<feature type="region of interest" description="Disordered" evidence="3">
    <location>
        <begin position="1"/>
        <end position="22"/>
    </location>
</feature>
<feature type="region of interest" description="Disordered" evidence="3">
    <location>
        <begin position="397"/>
        <end position="459"/>
    </location>
</feature>
<feature type="region of interest" description="Disordered" evidence="3">
    <location>
        <begin position="649"/>
        <end position="677"/>
    </location>
</feature>
<feature type="region of interest" description="Disordered" evidence="3">
    <location>
        <begin position="714"/>
        <end position="738"/>
    </location>
</feature>
<feature type="compositionally biased region" description="Polar residues" evidence="3">
    <location>
        <begin position="1"/>
        <end position="20"/>
    </location>
</feature>
<feature type="compositionally biased region" description="Polar residues" evidence="3">
    <location>
        <begin position="400"/>
        <end position="428"/>
    </location>
</feature>
<protein>
    <recommendedName>
        <fullName evidence="5">Pre-mRNA-processing protein 40C</fullName>
        <shortName evidence="5">AtPRP40c</shortName>
    </recommendedName>
    <alternativeName>
        <fullName>Transcription elongation regulator 1</fullName>
    </alternativeName>
</protein>